<protein>
    <recommendedName>
        <fullName>ATP-dependent kinase YFH7</fullName>
        <ecNumber>2.7.1.-</ecNumber>
    </recommendedName>
</protein>
<sequence length="353" mass="39650">MLDYDALVDQALQLLEQNINKNYRVCIGIIGPPGSGKSTVAEKLKEKINSRYHDYLAHEHHAEVAVRPLSSAIDLTGDLSVANKELQAEIKAGFYSHVEDNNFKPVQVKESDGSTLIVGRGGLDNAVRIKPLRKEANLSPTKPDIAQIVPMDGFHLSRKHLDHFKDPTVAHLRRGSPFTFDSNNFLQLCKVLSKTCSLDPNYHSTGPETVNEDNTNSLFDNVTNSFIDLPEISFPGFDHAIKDPVADQHTVHKFTRILILEGLYLLLNQENWSLIYDAIASTGAFIFWNIVIDEDVIEQRVAKRHVKSGICLSLEEGIQRFRANDQINGRLIQSQSVRNANKNVKNVYDIRND</sequence>
<reference key="1">
    <citation type="journal article" date="2004" name="Nature">
        <title>Genome evolution in yeasts.</title>
        <authorList>
            <person name="Dujon B."/>
            <person name="Sherman D."/>
            <person name="Fischer G."/>
            <person name="Durrens P."/>
            <person name="Casaregola S."/>
            <person name="Lafontaine I."/>
            <person name="de Montigny J."/>
            <person name="Marck C."/>
            <person name="Neuveglise C."/>
            <person name="Talla E."/>
            <person name="Goffard N."/>
            <person name="Frangeul L."/>
            <person name="Aigle M."/>
            <person name="Anthouard V."/>
            <person name="Babour A."/>
            <person name="Barbe V."/>
            <person name="Barnay S."/>
            <person name="Blanchin S."/>
            <person name="Beckerich J.-M."/>
            <person name="Beyne E."/>
            <person name="Bleykasten C."/>
            <person name="Boisrame A."/>
            <person name="Boyer J."/>
            <person name="Cattolico L."/>
            <person name="Confanioleri F."/>
            <person name="de Daruvar A."/>
            <person name="Despons L."/>
            <person name="Fabre E."/>
            <person name="Fairhead C."/>
            <person name="Ferry-Dumazet H."/>
            <person name="Groppi A."/>
            <person name="Hantraye F."/>
            <person name="Hennequin C."/>
            <person name="Jauniaux N."/>
            <person name="Joyet P."/>
            <person name="Kachouri R."/>
            <person name="Kerrest A."/>
            <person name="Koszul R."/>
            <person name="Lemaire M."/>
            <person name="Lesur I."/>
            <person name="Ma L."/>
            <person name="Muller H."/>
            <person name="Nicaud J.-M."/>
            <person name="Nikolski M."/>
            <person name="Oztas S."/>
            <person name="Ozier-Kalogeropoulos O."/>
            <person name="Pellenz S."/>
            <person name="Potier S."/>
            <person name="Richard G.-F."/>
            <person name="Straub M.-L."/>
            <person name="Suleau A."/>
            <person name="Swennen D."/>
            <person name="Tekaia F."/>
            <person name="Wesolowski-Louvel M."/>
            <person name="Westhof E."/>
            <person name="Wirth B."/>
            <person name="Zeniou-Meyer M."/>
            <person name="Zivanovic Y."/>
            <person name="Bolotin-Fukuhara M."/>
            <person name="Thierry A."/>
            <person name="Bouchier C."/>
            <person name="Caudron B."/>
            <person name="Scarpelli C."/>
            <person name="Gaillardin C."/>
            <person name="Weissenbach J."/>
            <person name="Wincker P."/>
            <person name="Souciet J.-L."/>
        </authorList>
    </citation>
    <scope>NUCLEOTIDE SEQUENCE [LARGE SCALE GENOMIC DNA]</scope>
    <source>
        <strain>ATCC 8585 / CBS 2359 / DSM 70799 / NBRC 1267 / NRRL Y-1140 / WM37</strain>
    </source>
</reference>
<feature type="chain" id="PRO_0000404214" description="ATP-dependent kinase YFH7">
    <location>
        <begin position="1"/>
        <end position="353"/>
    </location>
</feature>
<feature type="binding site" evidence="1">
    <location>
        <begin position="31"/>
        <end position="39"/>
    </location>
    <ligand>
        <name>ATP</name>
        <dbReference type="ChEBI" id="CHEBI:30616"/>
    </ligand>
</feature>
<dbReference type="EC" id="2.7.1.-"/>
<dbReference type="EMBL" id="CR382125">
    <property type="protein sequence ID" value="CAG99668.1"/>
    <property type="molecule type" value="Genomic_DNA"/>
</dbReference>
<dbReference type="RefSeq" id="XP_454581.1">
    <property type="nucleotide sequence ID" value="XM_454581.1"/>
</dbReference>
<dbReference type="SMR" id="Q6CNA8"/>
<dbReference type="FunCoup" id="Q6CNA8">
    <property type="interactions" value="18"/>
</dbReference>
<dbReference type="STRING" id="284590.Q6CNA8"/>
<dbReference type="PaxDb" id="284590-Q6CNA8"/>
<dbReference type="KEGG" id="kla:KLLA0_E13971g"/>
<dbReference type="eggNOG" id="KOG2702">
    <property type="taxonomic scope" value="Eukaryota"/>
</dbReference>
<dbReference type="HOGENOM" id="CLU_067202_1_0_1"/>
<dbReference type="InParanoid" id="Q6CNA8"/>
<dbReference type="OMA" id="LYDQENW"/>
<dbReference type="Proteomes" id="UP000000598">
    <property type="component" value="Chromosome E"/>
</dbReference>
<dbReference type="GO" id="GO:0005524">
    <property type="term" value="F:ATP binding"/>
    <property type="evidence" value="ECO:0007669"/>
    <property type="project" value="UniProtKB-KW"/>
</dbReference>
<dbReference type="GO" id="GO:0016301">
    <property type="term" value="F:kinase activity"/>
    <property type="evidence" value="ECO:0007669"/>
    <property type="project" value="UniProtKB-KW"/>
</dbReference>
<dbReference type="Gene3D" id="3.40.50.300">
    <property type="entry name" value="P-loop containing nucleotide triphosphate hydrolases"/>
    <property type="match status" value="1"/>
</dbReference>
<dbReference type="InterPro" id="IPR027417">
    <property type="entry name" value="P-loop_NTPase"/>
</dbReference>
<dbReference type="PANTHER" id="PTHR10285">
    <property type="entry name" value="URIDINE KINASE"/>
    <property type="match status" value="1"/>
</dbReference>
<dbReference type="SUPFAM" id="SSF52540">
    <property type="entry name" value="P-loop containing nucleoside triphosphate hydrolases"/>
    <property type="match status" value="1"/>
</dbReference>
<comment type="function">
    <text evidence="1">ATP-dependent kinase that could be involved in endoplasmic reticulum membrane assembly.</text>
</comment>
<comment type="similarity">
    <text evidence="2">Belongs to the YFH7 family.</text>
</comment>
<evidence type="ECO:0000250" key="1"/>
<evidence type="ECO:0000305" key="2"/>
<accession>Q6CNA8</accession>
<name>YFH7_KLULA</name>
<keyword id="KW-0067">ATP-binding</keyword>
<keyword id="KW-0418">Kinase</keyword>
<keyword id="KW-0547">Nucleotide-binding</keyword>
<keyword id="KW-1185">Reference proteome</keyword>
<keyword id="KW-0808">Transferase</keyword>
<proteinExistence type="inferred from homology"/>
<gene>
    <name type="primary">YFH7</name>
    <name type="ordered locus">KLLA0E13971g</name>
</gene>
<organism>
    <name type="scientific">Kluyveromyces lactis (strain ATCC 8585 / CBS 2359 / DSM 70799 / NBRC 1267 / NRRL Y-1140 / WM37)</name>
    <name type="common">Yeast</name>
    <name type="synonym">Candida sphaerica</name>
    <dbReference type="NCBI Taxonomy" id="284590"/>
    <lineage>
        <taxon>Eukaryota</taxon>
        <taxon>Fungi</taxon>
        <taxon>Dikarya</taxon>
        <taxon>Ascomycota</taxon>
        <taxon>Saccharomycotina</taxon>
        <taxon>Saccharomycetes</taxon>
        <taxon>Saccharomycetales</taxon>
        <taxon>Saccharomycetaceae</taxon>
        <taxon>Kluyveromyces</taxon>
    </lineage>
</organism>